<proteinExistence type="evidence at protein level"/>
<feature type="chain" id="PRO_0000080948" description="FYVE, RhoGEF and PH domain-containing protein 4">
    <location>
        <begin position="1"/>
        <end position="766"/>
    </location>
</feature>
<feature type="domain" description="DH" evidence="3">
    <location>
        <begin position="206"/>
        <end position="393"/>
    </location>
</feature>
<feature type="domain" description="PH 1" evidence="5">
    <location>
        <begin position="422"/>
        <end position="521"/>
    </location>
</feature>
<feature type="domain" description="PH 2" evidence="5">
    <location>
        <begin position="643"/>
        <end position="740"/>
    </location>
</feature>
<feature type="zinc finger region" description="FYVE-type" evidence="4">
    <location>
        <begin position="559"/>
        <end position="619"/>
    </location>
</feature>
<feature type="region of interest" description="Actin filament-binding" evidence="1">
    <location>
        <begin position="1"/>
        <end position="150"/>
    </location>
</feature>
<feature type="region of interest" description="Disordered" evidence="6">
    <location>
        <begin position="47"/>
        <end position="86"/>
    </location>
</feature>
<feature type="region of interest" description="Disordered" evidence="6">
    <location>
        <begin position="143"/>
        <end position="173"/>
    </location>
</feature>
<feature type="region of interest" description="Disordered" evidence="6">
    <location>
        <begin position="746"/>
        <end position="766"/>
    </location>
</feature>
<feature type="compositionally biased region" description="Polar residues" evidence="6">
    <location>
        <begin position="47"/>
        <end position="62"/>
    </location>
</feature>
<feature type="compositionally biased region" description="Polar residues" evidence="6">
    <location>
        <begin position="70"/>
        <end position="85"/>
    </location>
</feature>
<feature type="binding site" evidence="4">
    <location>
        <position position="565"/>
    </location>
    <ligand>
        <name>Zn(2+)</name>
        <dbReference type="ChEBI" id="CHEBI:29105"/>
        <label>1</label>
    </ligand>
</feature>
<feature type="binding site" evidence="4">
    <location>
        <position position="568"/>
    </location>
    <ligand>
        <name>Zn(2+)</name>
        <dbReference type="ChEBI" id="CHEBI:29105"/>
        <label>1</label>
    </ligand>
</feature>
<feature type="binding site" evidence="4">
    <location>
        <position position="582"/>
    </location>
    <ligand>
        <name>Zn(2+)</name>
        <dbReference type="ChEBI" id="CHEBI:29105"/>
        <label>2</label>
    </ligand>
</feature>
<feature type="binding site" evidence="4">
    <location>
        <position position="585"/>
    </location>
    <ligand>
        <name>Zn(2+)</name>
        <dbReference type="ChEBI" id="CHEBI:29105"/>
        <label>2</label>
    </ligand>
</feature>
<feature type="binding site" evidence="4">
    <location>
        <position position="590"/>
    </location>
    <ligand>
        <name>Zn(2+)</name>
        <dbReference type="ChEBI" id="CHEBI:29105"/>
        <label>1</label>
    </ligand>
</feature>
<feature type="binding site" evidence="4">
    <location>
        <position position="593"/>
    </location>
    <ligand>
        <name>Zn(2+)</name>
        <dbReference type="ChEBI" id="CHEBI:29105"/>
        <label>1</label>
    </ligand>
</feature>
<feature type="binding site" evidence="4">
    <location>
        <position position="611"/>
    </location>
    <ligand>
        <name>Zn(2+)</name>
        <dbReference type="ChEBI" id="CHEBI:29105"/>
        <label>2</label>
    </ligand>
</feature>
<feature type="binding site" evidence="4">
    <location>
        <position position="614"/>
    </location>
    <ligand>
        <name>Zn(2+)</name>
        <dbReference type="ChEBI" id="CHEBI:29105"/>
        <label>2</label>
    </ligand>
</feature>
<feature type="modified residue" description="Phosphoserine" evidence="2">
    <location>
        <position position="702"/>
    </location>
</feature>
<feature type="modified residue" description="Phosphoserine" evidence="13">
    <location>
        <position position="716"/>
    </location>
</feature>
<feature type="splice variant" id="VSP_013083" description="In isoform 4." evidence="11">
    <location>
        <begin position="1"/>
        <end position="44"/>
    </location>
</feature>
<feature type="splice variant" id="VSP_013084" description="In isoform 3 and isoform 4." evidence="10 11">
    <original>S</original>
    <variation>R</variation>
    <location>
        <position position="504"/>
    </location>
</feature>
<feature type="splice variant" id="VSP_013085" description="In isoform 3 and isoform 4." evidence="10 11">
    <location>
        <begin position="505"/>
        <end position="766"/>
    </location>
</feature>
<feature type="splice variant" id="VSP_013086" description="In isoform 2." evidence="10">
    <original>VCWKCSDYKAQLEYD</original>
    <variation>SEASSLSQLLEMVYR</variation>
    <location>
        <begin position="589"/>
        <end position="603"/>
    </location>
</feature>
<feature type="splice variant" id="VSP_013087" description="In isoform 2." evidence="10">
    <location>
        <begin position="604"/>
        <end position="766"/>
    </location>
</feature>
<feature type="sequence conflict" description="In Ref. 2; BAC35703." evidence="12" ref="2">
    <original>Y</original>
    <variation>C</variation>
    <location>
        <position position="36"/>
    </location>
</feature>
<feature type="sequence conflict" description="In Ref. 2; BAC35703." evidence="12" ref="2">
    <original>I</original>
    <variation>V</variation>
    <location>
        <position position="49"/>
    </location>
</feature>
<feature type="sequence conflict" description="In Ref. 2; BAE28995." evidence="12" ref="2">
    <original>E</original>
    <variation>K</variation>
    <location>
        <position position="278"/>
    </location>
</feature>
<gene>
    <name type="primary">Fgd4</name>
</gene>
<organism>
    <name type="scientific">Mus musculus</name>
    <name type="common">Mouse</name>
    <dbReference type="NCBI Taxonomy" id="10090"/>
    <lineage>
        <taxon>Eukaryota</taxon>
        <taxon>Metazoa</taxon>
        <taxon>Chordata</taxon>
        <taxon>Craniata</taxon>
        <taxon>Vertebrata</taxon>
        <taxon>Euteleostomi</taxon>
        <taxon>Mammalia</taxon>
        <taxon>Eutheria</taxon>
        <taxon>Euarchontoglires</taxon>
        <taxon>Glires</taxon>
        <taxon>Rodentia</taxon>
        <taxon>Myomorpha</taxon>
        <taxon>Muroidea</taxon>
        <taxon>Muridae</taxon>
        <taxon>Murinae</taxon>
        <taxon>Mus</taxon>
        <taxon>Mus</taxon>
    </lineage>
</organism>
<dbReference type="EMBL" id="AF402611">
    <property type="protein sequence ID" value="AAL05631.1"/>
    <property type="molecule type" value="mRNA"/>
</dbReference>
<dbReference type="EMBL" id="AF402612">
    <property type="protein sequence ID" value="AAL05632.1"/>
    <property type="molecule type" value="mRNA"/>
</dbReference>
<dbReference type="EMBL" id="AF402613">
    <property type="protein sequence ID" value="AAL05633.1"/>
    <property type="molecule type" value="mRNA"/>
</dbReference>
<dbReference type="EMBL" id="AK034504">
    <property type="protein sequence ID" value="BAC28733.1"/>
    <property type="molecule type" value="mRNA"/>
</dbReference>
<dbReference type="EMBL" id="AK054242">
    <property type="protein sequence ID" value="BAC35703.2"/>
    <property type="molecule type" value="mRNA"/>
</dbReference>
<dbReference type="EMBL" id="AK149626">
    <property type="protein sequence ID" value="BAE28995.1"/>
    <property type="molecule type" value="mRNA"/>
</dbReference>
<dbReference type="EMBL" id="BC129902">
    <property type="protein sequence ID" value="AAI29903.1"/>
    <property type="molecule type" value="mRNA"/>
</dbReference>
<dbReference type="EMBL" id="BC129903">
    <property type="protein sequence ID" value="AAI29904.1"/>
    <property type="molecule type" value="mRNA"/>
</dbReference>
<dbReference type="CCDS" id="CCDS27986.1">
    <molecule id="Q91ZT5-1"/>
</dbReference>
<dbReference type="RefSeq" id="NP_001288747.1">
    <molecule id="Q91ZT5-1"/>
    <property type="nucleotide sequence ID" value="NM_001301818.1"/>
</dbReference>
<dbReference type="RefSeq" id="NP_631978.1">
    <molecule id="Q91ZT5-1"/>
    <property type="nucleotide sequence ID" value="NM_139232.3"/>
</dbReference>
<dbReference type="RefSeq" id="XP_006522090.1">
    <molecule id="Q91ZT5-1"/>
    <property type="nucleotide sequence ID" value="XM_006522027.5"/>
</dbReference>
<dbReference type="RefSeq" id="XP_006522092.1">
    <molecule id="Q91ZT5-1"/>
    <property type="nucleotide sequence ID" value="XM_006522029.4"/>
</dbReference>
<dbReference type="SMR" id="Q91ZT5"/>
<dbReference type="BioGRID" id="230224">
    <property type="interactions" value="41"/>
</dbReference>
<dbReference type="FunCoup" id="Q91ZT5">
    <property type="interactions" value="606"/>
</dbReference>
<dbReference type="STRING" id="10090.ENSMUSP00000125174"/>
<dbReference type="iPTMnet" id="Q91ZT5"/>
<dbReference type="PhosphoSitePlus" id="Q91ZT5"/>
<dbReference type="PaxDb" id="10090-ENSMUSP00000125174"/>
<dbReference type="PeptideAtlas" id="Q91ZT5"/>
<dbReference type="ProteomicsDB" id="267460">
    <molecule id="Q91ZT5-1"/>
</dbReference>
<dbReference type="ProteomicsDB" id="267461">
    <molecule id="Q91ZT5-2"/>
</dbReference>
<dbReference type="ProteomicsDB" id="267462">
    <molecule id="Q91ZT5-3"/>
</dbReference>
<dbReference type="ProteomicsDB" id="267463">
    <molecule id="Q91ZT5-4"/>
</dbReference>
<dbReference type="Antibodypedia" id="48934">
    <property type="antibodies" value="99 antibodies from 20 providers"/>
</dbReference>
<dbReference type="DNASU" id="224014"/>
<dbReference type="Ensembl" id="ENSMUST00000161188.9">
    <molecule id="Q91ZT5-2"/>
    <property type="protein sequence ID" value="ENSMUSP00000123763.3"/>
    <property type="gene ID" value="ENSMUSG00000022788.17"/>
</dbReference>
<dbReference type="Ensembl" id="ENSMUST00000161861.8">
    <molecule id="Q91ZT5-1"/>
    <property type="protein sequence ID" value="ENSMUSP00000125174.2"/>
    <property type="gene ID" value="ENSMUSG00000022788.17"/>
</dbReference>
<dbReference type="Ensembl" id="ENSMUST00000162671.8">
    <molecule id="Q91ZT5-1"/>
    <property type="protein sequence ID" value="ENSMUSP00000125736.2"/>
    <property type="gene ID" value="ENSMUSG00000022788.17"/>
</dbReference>
<dbReference type="GeneID" id="224014"/>
<dbReference type="KEGG" id="mmu:224014"/>
<dbReference type="UCSC" id="uc007yip.2">
    <molecule id="Q91ZT5-1"/>
    <property type="organism name" value="mouse"/>
</dbReference>
<dbReference type="UCSC" id="uc007yis.1">
    <molecule id="Q91ZT5-2"/>
    <property type="organism name" value="mouse"/>
</dbReference>
<dbReference type="UCSC" id="uc007yit.3">
    <molecule id="Q91ZT5-3"/>
    <property type="organism name" value="mouse"/>
</dbReference>
<dbReference type="UCSC" id="uc007yiu.3">
    <molecule id="Q91ZT5-4"/>
    <property type="organism name" value="mouse"/>
</dbReference>
<dbReference type="AGR" id="MGI:2183747"/>
<dbReference type="CTD" id="121512"/>
<dbReference type="MGI" id="MGI:2183747">
    <property type="gene designation" value="Fgd4"/>
</dbReference>
<dbReference type="VEuPathDB" id="HostDB:ENSMUSG00000022788"/>
<dbReference type="eggNOG" id="KOG4424">
    <property type="taxonomic scope" value="Eukaryota"/>
</dbReference>
<dbReference type="GeneTree" id="ENSGT00940000155765"/>
<dbReference type="InParanoid" id="Q91ZT5"/>
<dbReference type="OMA" id="AHPMFPP"/>
<dbReference type="OrthoDB" id="660555at2759"/>
<dbReference type="PhylomeDB" id="Q91ZT5"/>
<dbReference type="TreeFam" id="TF316247"/>
<dbReference type="Reactome" id="R-MMU-193648">
    <property type="pathway name" value="NRAGE signals death through JNK"/>
</dbReference>
<dbReference type="Reactome" id="R-MMU-416482">
    <property type="pathway name" value="G alpha (12/13) signalling events"/>
</dbReference>
<dbReference type="Reactome" id="R-MMU-9013148">
    <property type="pathway name" value="CDC42 GTPase cycle"/>
</dbReference>
<dbReference type="BioGRID-ORCS" id="224014">
    <property type="hits" value="1 hit in 78 CRISPR screens"/>
</dbReference>
<dbReference type="ChiTaRS" id="Fgd4">
    <property type="organism name" value="mouse"/>
</dbReference>
<dbReference type="PRO" id="PR:Q91ZT5"/>
<dbReference type="Proteomes" id="UP000000589">
    <property type="component" value="Chromosome 16"/>
</dbReference>
<dbReference type="RNAct" id="Q91ZT5">
    <property type="molecule type" value="protein"/>
</dbReference>
<dbReference type="Bgee" id="ENSMUSG00000022788">
    <property type="expression patterns" value="Expressed in epithelium of small intestine and 246 other cell types or tissues"/>
</dbReference>
<dbReference type="ExpressionAtlas" id="Q91ZT5">
    <property type="expression patterns" value="baseline and differential"/>
</dbReference>
<dbReference type="GO" id="GO:0005737">
    <property type="term" value="C:cytoplasm"/>
    <property type="evidence" value="ECO:0007669"/>
    <property type="project" value="UniProtKB-KW"/>
</dbReference>
<dbReference type="GO" id="GO:0005856">
    <property type="term" value="C:cytoskeleton"/>
    <property type="evidence" value="ECO:0007669"/>
    <property type="project" value="UniProtKB-SubCell"/>
</dbReference>
<dbReference type="GO" id="GO:0030175">
    <property type="term" value="C:filopodium"/>
    <property type="evidence" value="ECO:0000314"/>
    <property type="project" value="MGI"/>
</dbReference>
<dbReference type="GO" id="GO:0030027">
    <property type="term" value="C:lamellipodium"/>
    <property type="evidence" value="ECO:0000314"/>
    <property type="project" value="MGI"/>
</dbReference>
<dbReference type="GO" id="GO:0003779">
    <property type="term" value="F:actin binding"/>
    <property type="evidence" value="ECO:0000266"/>
    <property type="project" value="MGI"/>
</dbReference>
<dbReference type="GO" id="GO:0005085">
    <property type="term" value="F:guanyl-nucleotide exchange factor activity"/>
    <property type="evidence" value="ECO:0007669"/>
    <property type="project" value="UniProtKB-KW"/>
</dbReference>
<dbReference type="GO" id="GO:0008270">
    <property type="term" value="F:zinc ion binding"/>
    <property type="evidence" value="ECO:0007669"/>
    <property type="project" value="UniProtKB-KW"/>
</dbReference>
<dbReference type="GO" id="GO:0030032">
    <property type="term" value="P:lamellipodium assembly"/>
    <property type="evidence" value="ECO:0000314"/>
    <property type="project" value="MGI"/>
</dbReference>
<dbReference type="GO" id="GO:0030035">
    <property type="term" value="P:microspike assembly"/>
    <property type="evidence" value="ECO:0000314"/>
    <property type="project" value="MGI"/>
</dbReference>
<dbReference type="CDD" id="cd15741">
    <property type="entry name" value="FYVE_FGD1_2_4"/>
    <property type="match status" value="1"/>
</dbReference>
<dbReference type="CDD" id="cd15791">
    <property type="entry name" value="PH1_FDG4"/>
    <property type="match status" value="1"/>
</dbReference>
<dbReference type="CDD" id="cd13236">
    <property type="entry name" value="PH2_FGD1-4"/>
    <property type="match status" value="1"/>
</dbReference>
<dbReference type="CDD" id="cd00160">
    <property type="entry name" value="RhoGEF"/>
    <property type="match status" value="1"/>
</dbReference>
<dbReference type="FunFam" id="3.30.40.10:FF:000061">
    <property type="entry name" value="FYVE, RhoGEF and PH domain containing 1"/>
    <property type="match status" value="1"/>
</dbReference>
<dbReference type="FunFam" id="1.20.900.10:FF:000013">
    <property type="entry name" value="FYVE, RhoGEF and PH domain-containing protein 4"/>
    <property type="match status" value="1"/>
</dbReference>
<dbReference type="FunFam" id="2.30.29.30:FF:000102">
    <property type="entry name" value="FYVE, RhoGEF and PH domain-containing protein 4"/>
    <property type="match status" value="1"/>
</dbReference>
<dbReference type="FunFam" id="2.30.29.30:FF:000113">
    <property type="entry name" value="FYVE, RhoGEF and PH domain-containing protein 4"/>
    <property type="match status" value="1"/>
</dbReference>
<dbReference type="Gene3D" id="1.20.900.10">
    <property type="entry name" value="Dbl homology (DH) domain"/>
    <property type="match status" value="1"/>
</dbReference>
<dbReference type="Gene3D" id="2.30.29.30">
    <property type="entry name" value="Pleckstrin-homology domain (PH domain)/Phosphotyrosine-binding domain (PTB)"/>
    <property type="match status" value="2"/>
</dbReference>
<dbReference type="Gene3D" id="3.30.40.10">
    <property type="entry name" value="Zinc/RING finger domain, C3HC4 (zinc finger)"/>
    <property type="match status" value="1"/>
</dbReference>
<dbReference type="InterPro" id="IPR035899">
    <property type="entry name" value="DBL_dom_sf"/>
</dbReference>
<dbReference type="InterPro" id="IPR000219">
    <property type="entry name" value="DH_dom"/>
</dbReference>
<dbReference type="InterPro" id="IPR037742">
    <property type="entry name" value="FDG4_N_PH"/>
</dbReference>
<dbReference type="InterPro" id="IPR035941">
    <property type="entry name" value="FGD1-4_PH2"/>
</dbReference>
<dbReference type="InterPro" id="IPR051092">
    <property type="entry name" value="FYVE_RhoGEF_PH"/>
</dbReference>
<dbReference type="InterPro" id="IPR011993">
    <property type="entry name" value="PH-like_dom_sf"/>
</dbReference>
<dbReference type="InterPro" id="IPR001849">
    <property type="entry name" value="PH_domain"/>
</dbReference>
<dbReference type="InterPro" id="IPR000306">
    <property type="entry name" value="Znf_FYVE"/>
</dbReference>
<dbReference type="InterPro" id="IPR017455">
    <property type="entry name" value="Znf_FYVE-rel"/>
</dbReference>
<dbReference type="InterPro" id="IPR013083">
    <property type="entry name" value="Znf_RING/FYVE/PHD"/>
</dbReference>
<dbReference type="PANTHER" id="PTHR12673">
    <property type="entry name" value="FACIOGENITAL DYSPLASIA PROTEIN"/>
    <property type="match status" value="1"/>
</dbReference>
<dbReference type="PANTHER" id="PTHR12673:SF98">
    <property type="entry name" value="FYVE, RHOGEF AND PH DOMAIN-CONTAINING PROTEIN 4"/>
    <property type="match status" value="1"/>
</dbReference>
<dbReference type="Pfam" id="PF01363">
    <property type="entry name" value="FYVE"/>
    <property type="match status" value="1"/>
</dbReference>
<dbReference type="Pfam" id="PF00169">
    <property type="entry name" value="PH"/>
    <property type="match status" value="2"/>
</dbReference>
<dbReference type="Pfam" id="PF00621">
    <property type="entry name" value="RhoGEF"/>
    <property type="match status" value="1"/>
</dbReference>
<dbReference type="SMART" id="SM00064">
    <property type="entry name" value="FYVE"/>
    <property type="match status" value="1"/>
</dbReference>
<dbReference type="SMART" id="SM00233">
    <property type="entry name" value="PH"/>
    <property type="match status" value="2"/>
</dbReference>
<dbReference type="SMART" id="SM00325">
    <property type="entry name" value="RhoGEF"/>
    <property type="match status" value="1"/>
</dbReference>
<dbReference type="SUPFAM" id="SSF48065">
    <property type="entry name" value="DBL homology domain (DH-domain)"/>
    <property type="match status" value="1"/>
</dbReference>
<dbReference type="SUPFAM" id="SSF50729">
    <property type="entry name" value="PH domain-like"/>
    <property type="match status" value="2"/>
</dbReference>
<dbReference type="PROSITE" id="PS50010">
    <property type="entry name" value="DH_2"/>
    <property type="match status" value="1"/>
</dbReference>
<dbReference type="PROSITE" id="PS50003">
    <property type="entry name" value="PH_DOMAIN"/>
    <property type="match status" value="2"/>
</dbReference>
<dbReference type="PROSITE" id="PS50178">
    <property type="entry name" value="ZF_FYVE"/>
    <property type="match status" value="1"/>
</dbReference>
<protein>
    <recommendedName>
        <fullName>FYVE, RhoGEF and PH domain-containing protein 4</fullName>
    </recommendedName>
    <alternativeName>
        <fullName>Actin filament-binding protein frabin</fullName>
    </alternativeName>
    <alternativeName>
        <fullName>FGD1-related F-actin-binding protein</fullName>
    </alternativeName>
</protein>
<reference key="1">
    <citation type="journal article" date="2001" name="Biochem. Biophys. Res. Commun.">
        <title>Identification of splicing variants of Frabin with partly different functions and tissue distribution.</title>
        <authorList>
            <person name="Ikeda W."/>
            <person name="Nakanishi H."/>
            <person name="Takekuni K."/>
            <person name="Itoh S."/>
            <person name="Takai Y."/>
        </authorList>
    </citation>
    <scope>NUCLEOTIDE SEQUENCE [MRNA] (ISOFORMS 1; 2 AND 3)</scope>
    <scope>FUNCTION</scope>
    <scope>SUBCELLULAR LOCATION</scope>
    <scope>TISSUE SPECIFICITY</scope>
    <source>
        <strain>C57BL/6J</strain>
        <tissue>Brain</tissue>
    </source>
</reference>
<reference key="2">
    <citation type="journal article" date="2005" name="Science">
        <title>The transcriptional landscape of the mammalian genome.</title>
        <authorList>
            <person name="Carninci P."/>
            <person name="Kasukawa T."/>
            <person name="Katayama S."/>
            <person name="Gough J."/>
            <person name="Frith M.C."/>
            <person name="Maeda N."/>
            <person name="Oyama R."/>
            <person name="Ravasi T."/>
            <person name="Lenhard B."/>
            <person name="Wells C."/>
            <person name="Kodzius R."/>
            <person name="Shimokawa K."/>
            <person name="Bajic V.B."/>
            <person name="Brenner S.E."/>
            <person name="Batalov S."/>
            <person name="Forrest A.R."/>
            <person name="Zavolan M."/>
            <person name="Davis M.J."/>
            <person name="Wilming L.G."/>
            <person name="Aidinis V."/>
            <person name="Allen J.E."/>
            <person name="Ambesi-Impiombato A."/>
            <person name="Apweiler R."/>
            <person name="Aturaliya R.N."/>
            <person name="Bailey T.L."/>
            <person name="Bansal M."/>
            <person name="Baxter L."/>
            <person name="Beisel K.W."/>
            <person name="Bersano T."/>
            <person name="Bono H."/>
            <person name="Chalk A.M."/>
            <person name="Chiu K.P."/>
            <person name="Choudhary V."/>
            <person name="Christoffels A."/>
            <person name="Clutterbuck D.R."/>
            <person name="Crowe M.L."/>
            <person name="Dalla E."/>
            <person name="Dalrymple B.P."/>
            <person name="de Bono B."/>
            <person name="Della Gatta G."/>
            <person name="di Bernardo D."/>
            <person name="Down T."/>
            <person name="Engstrom P."/>
            <person name="Fagiolini M."/>
            <person name="Faulkner G."/>
            <person name="Fletcher C.F."/>
            <person name="Fukushima T."/>
            <person name="Furuno M."/>
            <person name="Futaki S."/>
            <person name="Gariboldi M."/>
            <person name="Georgii-Hemming P."/>
            <person name="Gingeras T.R."/>
            <person name="Gojobori T."/>
            <person name="Green R.E."/>
            <person name="Gustincich S."/>
            <person name="Harbers M."/>
            <person name="Hayashi Y."/>
            <person name="Hensch T.K."/>
            <person name="Hirokawa N."/>
            <person name="Hill D."/>
            <person name="Huminiecki L."/>
            <person name="Iacono M."/>
            <person name="Ikeo K."/>
            <person name="Iwama A."/>
            <person name="Ishikawa T."/>
            <person name="Jakt M."/>
            <person name="Kanapin A."/>
            <person name="Katoh M."/>
            <person name="Kawasawa Y."/>
            <person name="Kelso J."/>
            <person name="Kitamura H."/>
            <person name="Kitano H."/>
            <person name="Kollias G."/>
            <person name="Krishnan S.P."/>
            <person name="Kruger A."/>
            <person name="Kummerfeld S.K."/>
            <person name="Kurochkin I.V."/>
            <person name="Lareau L.F."/>
            <person name="Lazarevic D."/>
            <person name="Lipovich L."/>
            <person name="Liu J."/>
            <person name="Liuni S."/>
            <person name="McWilliam S."/>
            <person name="Madan Babu M."/>
            <person name="Madera M."/>
            <person name="Marchionni L."/>
            <person name="Matsuda H."/>
            <person name="Matsuzawa S."/>
            <person name="Miki H."/>
            <person name="Mignone F."/>
            <person name="Miyake S."/>
            <person name="Morris K."/>
            <person name="Mottagui-Tabar S."/>
            <person name="Mulder N."/>
            <person name="Nakano N."/>
            <person name="Nakauchi H."/>
            <person name="Ng P."/>
            <person name="Nilsson R."/>
            <person name="Nishiguchi S."/>
            <person name="Nishikawa S."/>
            <person name="Nori F."/>
            <person name="Ohara O."/>
            <person name="Okazaki Y."/>
            <person name="Orlando V."/>
            <person name="Pang K.C."/>
            <person name="Pavan W.J."/>
            <person name="Pavesi G."/>
            <person name="Pesole G."/>
            <person name="Petrovsky N."/>
            <person name="Piazza S."/>
            <person name="Reed J."/>
            <person name="Reid J.F."/>
            <person name="Ring B.Z."/>
            <person name="Ringwald M."/>
            <person name="Rost B."/>
            <person name="Ruan Y."/>
            <person name="Salzberg S.L."/>
            <person name="Sandelin A."/>
            <person name="Schneider C."/>
            <person name="Schoenbach C."/>
            <person name="Sekiguchi K."/>
            <person name="Semple C.A."/>
            <person name="Seno S."/>
            <person name="Sessa L."/>
            <person name="Sheng Y."/>
            <person name="Shibata Y."/>
            <person name="Shimada H."/>
            <person name="Shimada K."/>
            <person name="Silva D."/>
            <person name="Sinclair B."/>
            <person name="Sperling S."/>
            <person name="Stupka E."/>
            <person name="Sugiura K."/>
            <person name="Sultana R."/>
            <person name="Takenaka Y."/>
            <person name="Taki K."/>
            <person name="Tammoja K."/>
            <person name="Tan S.L."/>
            <person name="Tang S."/>
            <person name="Taylor M.S."/>
            <person name="Tegner J."/>
            <person name="Teichmann S.A."/>
            <person name="Ueda H.R."/>
            <person name="van Nimwegen E."/>
            <person name="Verardo R."/>
            <person name="Wei C.L."/>
            <person name="Yagi K."/>
            <person name="Yamanishi H."/>
            <person name="Zabarovsky E."/>
            <person name="Zhu S."/>
            <person name="Zimmer A."/>
            <person name="Hide W."/>
            <person name="Bult C."/>
            <person name="Grimmond S.M."/>
            <person name="Teasdale R.D."/>
            <person name="Liu E.T."/>
            <person name="Brusic V."/>
            <person name="Quackenbush J."/>
            <person name="Wahlestedt C."/>
            <person name="Mattick J.S."/>
            <person name="Hume D.A."/>
            <person name="Kai C."/>
            <person name="Sasaki D."/>
            <person name="Tomaru Y."/>
            <person name="Fukuda S."/>
            <person name="Kanamori-Katayama M."/>
            <person name="Suzuki M."/>
            <person name="Aoki J."/>
            <person name="Arakawa T."/>
            <person name="Iida J."/>
            <person name="Imamura K."/>
            <person name="Itoh M."/>
            <person name="Kato T."/>
            <person name="Kawaji H."/>
            <person name="Kawagashira N."/>
            <person name="Kawashima T."/>
            <person name="Kojima M."/>
            <person name="Kondo S."/>
            <person name="Konno H."/>
            <person name="Nakano K."/>
            <person name="Ninomiya N."/>
            <person name="Nishio T."/>
            <person name="Okada M."/>
            <person name="Plessy C."/>
            <person name="Shibata K."/>
            <person name="Shiraki T."/>
            <person name="Suzuki S."/>
            <person name="Tagami M."/>
            <person name="Waki K."/>
            <person name="Watahiki A."/>
            <person name="Okamura-Oho Y."/>
            <person name="Suzuki H."/>
            <person name="Kawai J."/>
            <person name="Hayashizaki Y."/>
        </authorList>
    </citation>
    <scope>NUCLEOTIDE SEQUENCE [LARGE SCALE MRNA] (ISOFORM 4)</scope>
    <scope>NUCLEOTIDE SEQUENCE [LARGE SCALE MRNA] OF 1-754 (ISOFORM 1)</scope>
    <source>
        <strain>C57BL/6J</strain>
        <tissue>Bone marrow</tissue>
        <tissue>Diencephalon</tissue>
        <tissue>Oviduct</tissue>
    </source>
</reference>
<reference key="3">
    <citation type="journal article" date="2004" name="Genome Res.">
        <title>The status, quality, and expansion of the NIH full-length cDNA project: the Mammalian Gene Collection (MGC).</title>
        <authorList>
            <consortium name="The MGC Project Team"/>
        </authorList>
    </citation>
    <scope>NUCLEOTIDE SEQUENCE [LARGE SCALE MRNA] (ISOFORM 1)</scope>
</reference>
<reference key="4">
    <citation type="journal article" date="2000" name="Oncogene">
        <title>Two actions of frabin: direct activation of Cdc42 and indirect activation of Rac.</title>
        <authorList>
            <person name="Ono Y."/>
            <person name="Nakanishi H."/>
            <person name="Nishimura M."/>
            <person name="Kakizaki M."/>
            <person name="Takahashi K."/>
            <person name="Miyahara M."/>
            <person name="Satoh-Horikawa K."/>
            <person name="Mandai K."/>
            <person name="Takai Y."/>
        </authorList>
    </citation>
    <scope>FUNCTION</scope>
</reference>
<reference key="5">
    <citation type="journal article" date="2002" name="Genes Cells">
        <title>Association of frabin with specific actin and membrane structures.</title>
        <authorList>
            <person name="Kim Y."/>
            <person name="Ikeda W."/>
            <person name="Nakanishi H."/>
            <person name="Tanaka Y."/>
            <person name="Takekuni K."/>
            <person name="Itoh S."/>
            <person name="Monden M."/>
            <person name="Takai Y."/>
        </authorList>
    </citation>
    <scope>SUBCELLULAR LOCATION</scope>
</reference>
<reference key="6">
    <citation type="journal article" date="2007" name="Am. J. Hum. Genet.">
        <title>Mutations in FGD4 encoding the Rho GDP/GTP exchange factor FRABIN cause autosomal recessive Charcot-Marie-Tooth type 4H.</title>
        <authorList>
            <person name="Delague V."/>
            <person name="Jacquier A."/>
            <person name="Hamadouche T."/>
            <person name="Poitelon Y."/>
            <person name="Baudot C."/>
            <person name="Boccaccio I."/>
            <person name="Chouery E."/>
            <person name="Chaouch M."/>
            <person name="Kassouri N."/>
            <person name="Jabbour R."/>
            <person name="Grid D."/>
            <person name="Megarbane A."/>
            <person name="Haase G."/>
            <person name="Levy N."/>
        </authorList>
    </citation>
    <scope>TISSUE SPECIFICITY</scope>
</reference>
<reference key="7">
    <citation type="journal article" date="2010" name="Cell">
        <title>A tissue-specific atlas of mouse protein phosphorylation and expression.</title>
        <authorList>
            <person name="Huttlin E.L."/>
            <person name="Jedrychowski M.P."/>
            <person name="Elias J.E."/>
            <person name="Goswami T."/>
            <person name="Rad R."/>
            <person name="Beausoleil S.A."/>
            <person name="Villen J."/>
            <person name="Haas W."/>
            <person name="Sowa M.E."/>
            <person name="Gygi S.P."/>
        </authorList>
    </citation>
    <scope>PHOSPHORYLATION [LARGE SCALE ANALYSIS] AT SER-716</scope>
    <scope>IDENTIFICATION BY MASS SPECTROMETRY [LARGE SCALE ANALYSIS]</scope>
    <source>
        <tissue>Brain</tissue>
    </source>
</reference>
<comment type="function">
    <text evidence="1 7 8">Activates CDC42, a member of the Ras-like family of Rho- and Rac proteins, by exchanging bound GDP for free GTP. Activates MAPK8 (By similarity). Plays a role in regulating the actin cytoskeleton and cell shape. Promotes the formation of lamellipodia.</text>
</comment>
<comment type="subunit">
    <text evidence="1">Homooligomer.</text>
</comment>
<comment type="subcellular location">
    <subcellularLocation>
        <location evidence="1">Cytoplasm</location>
        <location evidence="1">Cytoskeleton</location>
    </subcellularLocation>
    <subcellularLocation>
        <location evidence="1">Cell projection</location>
        <location evidence="1">Filopodium</location>
    </subcellularLocation>
    <text evidence="1">Concentrated in filopodia and poorly detected at lamellipodia. Binds along the sides of actin fibers (By similarity).</text>
</comment>
<comment type="alternative products">
    <event type="alternative splicing"/>
    <isoform>
        <id>Q91ZT5-1</id>
        <name>1</name>
        <name>Frabin alpha</name>
        <sequence type="displayed"/>
    </isoform>
    <isoform>
        <id>Q91ZT5-2</id>
        <name>2</name>
        <name>Frabin beta</name>
        <sequence type="described" ref="VSP_013086 VSP_013087"/>
    </isoform>
    <isoform>
        <id>Q91ZT5-3</id>
        <name>3</name>
        <name>Frabin gamma</name>
        <sequence type="described" ref="VSP_013084 VSP_013085"/>
    </isoform>
    <isoform>
        <id>Q91ZT5-4</id>
        <name>4</name>
        <sequence type="described" ref="VSP_013083 VSP_013084 VSP_013085"/>
    </isoform>
</comment>
<comment type="tissue specificity">
    <text evidence="8 9">Detected in thymus, lung, heart, skeletal muscle, small intestine, liver, kidney, spleen and testis. Expressed in all parts of the brain and in the spinal cord at embryonic, postnatal, and adult stages. Levels of expression are lower in postnatal and adult tissues than in embryonic tissues.</text>
</comment>
<comment type="domain">
    <text evidence="1">The part of the protein spanning the actin filament-binding domain together with the DH domain and the first PH domain is necessary and sufficient for microspike formation. Activation of MAPK8 requires the presence of all domains with the exception of the actin filament-binding domain (By similarity).</text>
</comment>
<name>FGD4_MOUSE</name>
<evidence type="ECO:0000250" key="1"/>
<evidence type="ECO:0000250" key="2">
    <source>
        <dbReference type="UniProtKB" id="Q96M96"/>
    </source>
</evidence>
<evidence type="ECO:0000255" key="3">
    <source>
        <dbReference type="PROSITE-ProRule" id="PRU00062"/>
    </source>
</evidence>
<evidence type="ECO:0000255" key="4">
    <source>
        <dbReference type="PROSITE-ProRule" id="PRU00091"/>
    </source>
</evidence>
<evidence type="ECO:0000255" key="5">
    <source>
        <dbReference type="PROSITE-ProRule" id="PRU00145"/>
    </source>
</evidence>
<evidence type="ECO:0000256" key="6">
    <source>
        <dbReference type="SAM" id="MobiDB-lite"/>
    </source>
</evidence>
<evidence type="ECO:0000269" key="7">
    <source>
    </source>
</evidence>
<evidence type="ECO:0000269" key="8">
    <source>
    </source>
</evidence>
<evidence type="ECO:0000269" key="9">
    <source>
    </source>
</evidence>
<evidence type="ECO:0000303" key="10">
    <source>
    </source>
</evidence>
<evidence type="ECO:0000303" key="11">
    <source>
    </source>
</evidence>
<evidence type="ECO:0000305" key="12"/>
<evidence type="ECO:0007744" key="13">
    <source>
    </source>
</evidence>
<sequence>MEESNPAPTSCTSKGKHSKVSDLISHFEGGSVLSSYIDLQKDSTMNLNIPQTLGQPGLTSSPPRKFLPQHSPQKQENDPDQTQGQHGCLANGVVAAQNQMECEDEKETTLSPEMAIQTAAASPDTHVLNGERNETITDSASSIANSHDENASDSSCRTPGTDLGLPSKEGEPGMDAELQERENGVNTMGLDTLDQHHEVKETNEQKLHKIATELLLTERAYVSRLDLLDQVFYCKLLEEANRGSFPAEMVNKIFSNISSINAFHSKFLLPELEKRMQEWETTPRIGDILQKLAPFLKMYGEYVKGFDNAVELVKTMTERVPQFKSVTEEIQKQKICGSLTLQHHMLEPIQRIPRYEMLLKDYLKKLSPDSPDWNDAKKSLEIISTAASHSNSAIRKMENLKKLLEIYEMLGEEEDIVNPSNELIKEGQILKLAARNTSAQERYLFLFNNMLLYCVPRFSLVGSKFTVRTRVGIDGMKIVETHNEEYPHTFQISGKERTLELQASSEQDKEEWIKALQESIDAFHQRHETFRNAIAKENDIPLEVSTAELGKRAPRWIRDNEVTMCMKCKESFNALTRRRHHCRACGHVVCWKCSDYKAQLEYDGGRLNKVCKDCYQIISGFTDSEEKKRRGILEIESAEVSGNSEVCSFLQYMEKSKPWQKIWCVIPKQDPLVLYMYGAPQDVRAQATIPLLGYVVDDMPKSADLPHSFKLTQSKSVHSFAADNEELKQKWLKIILLAVTGETPDGPSEHLATLNNLPGPKKKSEC</sequence>
<accession>Q91ZT5</accession>
<accession>A1L355</accession>
<accession>Q3UEB6</accession>
<accession>Q8BW60</accession>
<accession>Q8BZI7</accession>
<accession>Q91ZT3</accession>
<accession>Q91ZT4</accession>
<keyword id="KW-0009">Actin-binding</keyword>
<keyword id="KW-0025">Alternative splicing</keyword>
<keyword id="KW-0966">Cell projection</keyword>
<keyword id="KW-0963">Cytoplasm</keyword>
<keyword id="KW-0206">Cytoskeleton</keyword>
<keyword id="KW-0344">Guanine-nucleotide releasing factor</keyword>
<keyword id="KW-0479">Metal-binding</keyword>
<keyword id="KW-0597">Phosphoprotein</keyword>
<keyword id="KW-1185">Reference proteome</keyword>
<keyword id="KW-0677">Repeat</keyword>
<keyword id="KW-0862">Zinc</keyword>
<keyword id="KW-0863">Zinc-finger</keyword>